<keyword id="KW-0007">Acetylation</keyword>
<keyword id="KW-0053">Apoptosis</keyword>
<keyword id="KW-0072">Autophagy</keyword>
<keyword id="KW-0963">Cytoplasm</keyword>
<keyword id="KW-0391">Immunity</keyword>
<keyword id="KW-1017">Isopeptide bond</keyword>
<keyword id="KW-0472">Membrane</keyword>
<keyword id="KW-1185">Reference proteome</keyword>
<keyword id="KW-0832">Ubl conjugation</keyword>
<proteinExistence type="evidence at protein level"/>
<accession>Q99J83</accession>
<protein>
    <recommendedName>
        <fullName evidence="20">Autophagy protein 5</fullName>
    </recommendedName>
    <alternativeName>
        <fullName>APG5-like</fullName>
    </alternativeName>
</protein>
<name>ATG5_MOUSE</name>
<gene>
    <name evidence="21" type="primary">Atg5</name>
    <name type="synonym">Apg5l</name>
</gene>
<reference key="1">
    <citation type="journal article" date="2001" name="J. Cell Biol.">
        <title>Dissection of autophagosome formation using Apg5-deficient mouse embryonic stem cells.</title>
        <authorList>
            <person name="Mizushima N."/>
            <person name="Yamamoto A."/>
            <person name="Hatano M."/>
            <person name="Kobayashi Y."/>
            <person name="Kabeya Y."/>
            <person name="Suzuki K."/>
            <person name="Tokuhisa T."/>
            <person name="Ohsumi Y."/>
            <person name="Yoshimori T."/>
        </authorList>
    </citation>
    <scope>NUCLEOTIDE SEQUENCE [MRNA]</scope>
    <scope>FUNCTION</scope>
    <scope>CONJUGATION TO ATG12</scope>
    <scope>MUTAGENESIS OF LYS-130</scope>
    <source>
        <tissue>Embryonic stem cell</tissue>
    </source>
</reference>
<reference key="2">
    <citation type="journal article" date="2005" name="Science">
        <title>The transcriptional landscape of the mammalian genome.</title>
        <authorList>
            <person name="Carninci P."/>
            <person name="Kasukawa T."/>
            <person name="Katayama S."/>
            <person name="Gough J."/>
            <person name="Frith M.C."/>
            <person name="Maeda N."/>
            <person name="Oyama R."/>
            <person name="Ravasi T."/>
            <person name="Lenhard B."/>
            <person name="Wells C."/>
            <person name="Kodzius R."/>
            <person name="Shimokawa K."/>
            <person name="Bajic V.B."/>
            <person name="Brenner S.E."/>
            <person name="Batalov S."/>
            <person name="Forrest A.R."/>
            <person name="Zavolan M."/>
            <person name="Davis M.J."/>
            <person name="Wilming L.G."/>
            <person name="Aidinis V."/>
            <person name="Allen J.E."/>
            <person name="Ambesi-Impiombato A."/>
            <person name="Apweiler R."/>
            <person name="Aturaliya R.N."/>
            <person name="Bailey T.L."/>
            <person name="Bansal M."/>
            <person name="Baxter L."/>
            <person name="Beisel K.W."/>
            <person name="Bersano T."/>
            <person name="Bono H."/>
            <person name="Chalk A.M."/>
            <person name="Chiu K.P."/>
            <person name="Choudhary V."/>
            <person name="Christoffels A."/>
            <person name="Clutterbuck D.R."/>
            <person name="Crowe M.L."/>
            <person name="Dalla E."/>
            <person name="Dalrymple B.P."/>
            <person name="de Bono B."/>
            <person name="Della Gatta G."/>
            <person name="di Bernardo D."/>
            <person name="Down T."/>
            <person name="Engstrom P."/>
            <person name="Fagiolini M."/>
            <person name="Faulkner G."/>
            <person name="Fletcher C.F."/>
            <person name="Fukushima T."/>
            <person name="Furuno M."/>
            <person name="Futaki S."/>
            <person name="Gariboldi M."/>
            <person name="Georgii-Hemming P."/>
            <person name="Gingeras T.R."/>
            <person name="Gojobori T."/>
            <person name="Green R.E."/>
            <person name="Gustincich S."/>
            <person name="Harbers M."/>
            <person name="Hayashi Y."/>
            <person name="Hensch T.K."/>
            <person name="Hirokawa N."/>
            <person name="Hill D."/>
            <person name="Huminiecki L."/>
            <person name="Iacono M."/>
            <person name="Ikeo K."/>
            <person name="Iwama A."/>
            <person name="Ishikawa T."/>
            <person name="Jakt M."/>
            <person name="Kanapin A."/>
            <person name="Katoh M."/>
            <person name="Kawasawa Y."/>
            <person name="Kelso J."/>
            <person name="Kitamura H."/>
            <person name="Kitano H."/>
            <person name="Kollias G."/>
            <person name="Krishnan S.P."/>
            <person name="Kruger A."/>
            <person name="Kummerfeld S.K."/>
            <person name="Kurochkin I.V."/>
            <person name="Lareau L.F."/>
            <person name="Lazarevic D."/>
            <person name="Lipovich L."/>
            <person name="Liu J."/>
            <person name="Liuni S."/>
            <person name="McWilliam S."/>
            <person name="Madan Babu M."/>
            <person name="Madera M."/>
            <person name="Marchionni L."/>
            <person name="Matsuda H."/>
            <person name="Matsuzawa S."/>
            <person name="Miki H."/>
            <person name="Mignone F."/>
            <person name="Miyake S."/>
            <person name="Morris K."/>
            <person name="Mottagui-Tabar S."/>
            <person name="Mulder N."/>
            <person name="Nakano N."/>
            <person name="Nakauchi H."/>
            <person name="Ng P."/>
            <person name="Nilsson R."/>
            <person name="Nishiguchi S."/>
            <person name="Nishikawa S."/>
            <person name="Nori F."/>
            <person name="Ohara O."/>
            <person name="Okazaki Y."/>
            <person name="Orlando V."/>
            <person name="Pang K.C."/>
            <person name="Pavan W.J."/>
            <person name="Pavesi G."/>
            <person name="Pesole G."/>
            <person name="Petrovsky N."/>
            <person name="Piazza S."/>
            <person name="Reed J."/>
            <person name="Reid J.F."/>
            <person name="Ring B.Z."/>
            <person name="Ringwald M."/>
            <person name="Rost B."/>
            <person name="Ruan Y."/>
            <person name="Salzberg S.L."/>
            <person name="Sandelin A."/>
            <person name="Schneider C."/>
            <person name="Schoenbach C."/>
            <person name="Sekiguchi K."/>
            <person name="Semple C.A."/>
            <person name="Seno S."/>
            <person name="Sessa L."/>
            <person name="Sheng Y."/>
            <person name="Shibata Y."/>
            <person name="Shimada H."/>
            <person name="Shimada K."/>
            <person name="Silva D."/>
            <person name="Sinclair B."/>
            <person name="Sperling S."/>
            <person name="Stupka E."/>
            <person name="Sugiura K."/>
            <person name="Sultana R."/>
            <person name="Takenaka Y."/>
            <person name="Taki K."/>
            <person name="Tammoja K."/>
            <person name="Tan S.L."/>
            <person name="Tang S."/>
            <person name="Taylor M.S."/>
            <person name="Tegner J."/>
            <person name="Teichmann S.A."/>
            <person name="Ueda H.R."/>
            <person name="van Nimwegen E."/>
            <person name="Verardo R."/>
            <person name="Wei C.L."/>
            <person name="Yagi K."/>
            <person name="Yamanishi H."/>
            <person name="Zabarovsky E."/>
            <person name="Zhu S."/>
            <person name="Zimmer A."/>
            <person name="Hide W."/>
            <person name="Bult C."/>
            <person name="Grimmond S.M."/>
            <person name="Teasdale R.D."/>
            <person name="Liu E.T."/>
            <person name="Brusic V."/>
            <person name="Quackenbush J."/>
            <person name="Wahlestedt C."/>
            <person name="Mattick J.S."/>
            <person name="Hume D.A."/>
            <person name="Kai C."/>
            <person name="Sasaki D."/>
            <person name="Tomaru Y."/>
            <person name="Fukuda S."/>
            <person name="Kanamori-Katayama M."/>
            <person name="Suzuki M."/>
            <person name="Aoki J."/>
            <person name="Arakawa T."/>
            <person name="Iida J."/>
            <person name="Imamura K."/>
            <person name="Itoh M."/>
            <person name="Kato T."/>
            <person name="Kawaji H."/>
            <person name="Kawagashira N."/>
            <person name="Kawashima T."/>
            <person name="Kojima M."/>
            <person name="Kondo S."/>
            <person name="Konno H."/>
            <person name="Nakano K."/>
            <person name="Ninomiya N."/>
            <person name="Nishio T."/>
            <person name="Okada M."/>
            <person name="Plessy C."/>
            <person name="Shibata K."/>
            <person name="Shiraki T."/>
            <person name="Suzuki S."/>
            <person name="Tagami M."/>
            <person name="Waki K."/>
            <person name="Watahiki A."/>
            <person name="Okamura-Oho Y."/>
            <person name="Suzuki H."/>
            <person name="Kawai J."/>
            <person name="Hayashizaki Y."/>
        </authorList>
    </citation>
    <scope>NUCLEOTIDE SEQUENCE [LARGE SCALE MRNA]</scope>
    <source>
        <strain>C57BL/6J</strain>
        <tissue>Brain</tissue>
    </source>
</reference>
<reference key="3">
    <citation type="journal article" date="2004" name="Genome Res.">
        <title>The status, quality, and expansion of the NIH full-length cDNA project: the Mammalian Gene Collection (MGC).</title>
        <authorList>
            <consortium name="The MGC Project Team"/>
        </authorList>
    </citation>
    <scope>NUCLEOTIDE SEQUENCE [LARGE SCALE MRNA]</scope>
</reference>
<reference key="4">
    <citation type="journal article" date="2002" name="FEBS Lett.">
        <title>Mouse Apg10 as an Apg12-conjugating enzyme: analysis by the conjugation-mediated yeast two-hybrid method.</title>
        <authorList>
            <person name="Mizushima N."/>
            <person name="Yoshimori T."/>
            <person name="Ohsumi Y."/>
        </authorList>
    </citation>
    <scope>INTERACTION WITH ATG10</scope>
    <scope>CONJUGATION TO ATG12</scope>
</reference>
<reference key="5">
    <citation type="journal article" date="2003" name="J. Biol. Chem.">
        <title>The mouse APG10 homologue, an E2-like enzyme for Apg12p conjugation, facilitates MAP-LC3 modification.</title>
        <authorList>
            <person name="Nemoto T."/>
            <person name="Tanida I."/>
            <person name="Tanida-Miyake E."/>
            <person name="Minematsu-Ikeguchi N."/>
            <person name="Yokota M."/>
            <person name="Ohsumi M."/>
            <person name="Ueno T."/>
            <person name="Kominami E."/>
        </authorList>
    </citation>
    <scope>CONJUGATION TO ATG12 BY ATG10</scope>
    <scope>FUNCTION</scope>
</reference>
<reference key="6">
    <citation type="journal article" date="2003" name="J. Cell Sci.">
        <title>Mouse Apg16L, a novel WD-repeat protein, targets to the autophagic isolation membrane with the Apg12-Apg5 conjugate.</title>
        <authorList>
            <person name="Mizushima N."/>
            <person name="Kuma A."/>
            <person name="Kobayashi Y."/>
            <person name="Yamamoto A."/>
            <person name="Matsubae M."/>
            <person name="Takao T."/>
            <person name="Natsume T."/>
            <person name="Ohsumi Y."/>
            <person name="Yoshimori T."/>
        </authorList>
    </citation>
    <scope>IDENTIFICATION IN A COMPLEX WITH ATG12 AND ATG16L1</scope>
</reference>
<reference key="7">
    <citation type="journal article" date="2007" name="Autophagy">
        <title>Aberrant membranes and double-membrane structures accumulate in the axons of Atg5-null Purkinje cells before neuronal death.</title>
        <authorList>
            <person name="Nishiyama J."/>
            <person name="Miura E."/>
            <person name="Mizushima N."/>
            <person name="Watanabe M."/>
            <person name="Yuzaki M."/>
        </authorList>
    </citation>
    <scope>FUNCTION</scope>
</reference>
<reference key="8">
    <citation type="journal article" date="2007" name="J. Exp. Med.">
        <title>A critical role for the autophagy gene Atg5 in T cell survival and proliferation.</title>
        <authorList>
            <person name="Pua H.H."/>
            <person name="Dzhagalov I."/>
            <person name="Chuck M."/>
            <person name="Mizushima N."/>
            <person name="He Y.W."/>
        </authorList>
    </citation>
    <scope>FUNCTION</scope>
</reference>
<reference key="9">
    <citation type="journal article" date="2007" name="Proc. Natl. Acad. Sci. U.S.A.">
        <title>The Atg5-Atg12 conjugate associates with innate antiviral immune responses.</title>
        <authorList>
            <person name="Jounai N."/>
            <person name="Takeshita F."/>
            <person name="Kobiyama K."/>
            <person name="Sawano A."/>
            <person name="Miyawaki A."/>
            <person name="Xin K.Q."/>
            <person name="Ishii K.J."/>
            <person name="Kawai T."/>
            <person name="Akira S."/>
            <person name="Suzuki K."/>
            <person name="Okuda K."/>
        </authorList>
    </citation>
    <scope>FUNCTION IN VIRAL INFECTION</scope>
</reference>
<reference key="10">
    <citation type="journal article" date="2008" name="Autophagy">
        <title>The autophagy gene ATG5 plays an essential role in B lymphocyte development.</title>
        <authorList>
            <person name="Miller B.C."/>
            <person name="Zhao Z."/>
            <person name="Stephenson L.M."/>
            <person name="Cadwell K."/>
            <person name="Pua H.H."/>
            <person name="Lee H.K."/>
            <person name="Mizushima N.N."/>
            <person name="Iwasaki A."/>
            <person name="He Y.W."/>
            <person name="Swat W."/>
            <person name="Virgin H.W."/>
        </authorList>
    </citation>
    <scope>FUNCTION</scope>
</reference>
<reference key="11">
    <citation type="journal article" date="2008" name="Mol. Biol. Cell">
        <title>The Atg8 conjugation system is indispensable for proper development of autophagic isolation membranes in mice.</title>
        <authorList>
            <person name="Sou Y.S."/>
            <person name="Waguri S."/>
            <person name="Iwata J."/>
            <person name="Ueno T."/>
            <person name="Fujimura T."/>
            <person name="Hara T."/>
            <person name="Sawada N."/>
            <person name="Yamada A."/>
            <person name="Mizushima N."/>
            <person name="Uchiyama Y."/>
            <person name="Kominami E."/>
            <person name="Tanaka K."/>
            <person name="Komatsu M."/>
        </authorList>
    </citation>
    <scope>CONJUGATION TO ATG12</scope>
</reference>
<reference key="12">
    <citation type="journal article" date="2009" name="Blood">
        <title>Mitochondrial clearance is regulated by Atg7-dependent and -independent mechanisms during reticulocyte maturation.</title>
        <authorList>
            <person name="Zhang J."/>
            <person name="Randall M.S."/>
            <person name="Loyd M.R."/>
            <person name="Dorsey F.C."/>
            <person name="Kundu M."/>
            <person name="Cleveland J.L."/>
            <person name="Ney P.A."/>
        </authorList>
    </citation>
    <scope>CONJUGATION TO ATG12</scope>
</reference>
<reference key="13">
    <citation type="journal article" date="2009" name="Autophagy">
        <title>Targeted deletion of autophagy-related 5 (atg5) impairs adipogenesis in a cellular model and in mice.</title>
        <authorList>
            <person name="Baerga R."/>
            <person name="Zhang Y."/>
            <person name="Chen P.H."/>
            <person name="Goldman S."/>
            <person name="Jin S."/>
        </authorList>
    </citation>
    <scope>FUNCTION</scope>
</reference>
<reference key="14">
    <citation type="journal article" date="2010" name="Cell">
        <title>A tissue-specific atlas of mouse protein phosphorylation and expression.</title>
        <authorList>
            <person name="Huttlin E.L."/>
            <person name="Jedrychowski M.P."/>
            <person name="Elias J.E."/>
            <person name="Goswami T."/>
            <person name="Rad R."/>
            <person name="Beausoleil S.A."/>
            <person name="Villen J."/>
            <person name="Haas W."/>
            <person name="Sowa M.E."/>
            <person name="Gygi S.P."/>
        </authorList>
    </citation>
    <scope>IDENTIFICATION BY MASS SPECTROMETRY [LARGE SCALE ANALYSIS]</scope>
    <source>
        <tissue>Brain</tissue>
        <tissue>Lung</tissue>
        <tissue>Pancreas</tissue>
        <tissue>Spleen</tissue>
        <tissue>Testis</tissue>
    </source>
</reference>
<reference key="15">
    <citation type="journal article" date="2010" name="Immunity">
        <title>In vivo requirement for Atg5 in antigen presentation by dendritic cells.</title>
        <authorList>
            <person name="Lee H.K."/>
            <person name="Mattei L.M."/>
            <person name="Steinberg B.E."/>
            <person name="Alberts P."/>
            <person name="Lee Y.H."/>
            <person name="Chervonsky A."/>
            <person name="Mizushima N."/>
            <person name="Grinstein S."/>
            <person name="Iwasaki A."/>
        </authorList>
    </citation>
    <scope>FUNCTION</scope>
</reference>
<reference key="16">
    <citation type="journal article" date="2013" name="Nature">
        <title>Functional interaction between autophagy and ciliogenesis.</title>
        <authorList>
            <person name="Pampliega O."/>
            <person name="Orhon I."/>
            <person name="Patel B."/>
            <person name="Sridhar S."/>
            <person name="Diaz-Carretero A."/>
            <person name="Beau I."/>
            <person name="Codogno P."/>
            <person name="Satir B.H."/>
            <person name="Satir P."/>
            <person name="Cuervo A.M."/>
        </authorList>
    </citation>
    <scope>SUBCELLULAR LOCATION</scope>
    <scope>FUNCTION</scope>
</reference>
<reference key="17">
    <citation type="journal article" date="2013" name="Nature">
        <title>Autophagy promotes primary ciliogenesis by removing OFD1 from centriolar satellites.</title>
        <authorList>
            <person name="Tang Z."/>
            <person name="Lin M.G."/>
            <person name="Stowe T.R."/>
            <person name="Chen S."/>
            <person name="Zhu M."/>
            <person name="Stearns T."/>
            <person name="Franco B."/>
            <person name="Zhong Q."/>
        </authorList>
    </citation>
    <scope>FUNCTION</scope>
</reference>
<reference key="18">
    <citation type="journal article" date="2017" name="Neuron">
        <title>Bassoon Controls Presynaptic Autophagy through Atg5.</title>
        <authorList>
            <person name="Okerlund N.D."/>
            <person name="Schneider K."/>
            <person name="Leal-Ortiz S."/>
            <person name="Montenegro-Venegas C."/>
            <person name="Kim S.A."/>
            <person name="Garner L.C."/>
            <person name="Waites C.L."/>
            <person name="Gundelfinger E.D."/>
            <person name="Reimer R.J."/>
            <person name="Garner C.C."/>
        </authorList>
    </citation>
    <scope>INTERACTION WITH BSN</scope>
</reference>
<reference key="19">
    <citation type="journal article" date="2011" name="Autophagy">
        <title>Atg16L2, a novel isoform of mammalian Atg16L that is not essential for canonical autophagy despite forming an Atg12-5-16L2 complex.</title>
        <authorList>
            <person name="Ishibashi K."/>
            <person name="Fujita N."/>
            <person name="Kanno E."/>
            <person name="Omori H."/>
            <person name="Yoshimori T."/>
            <person name="Itoh T."/>
            <person name="Fukuda M."/>
        </authorList>
    </citation>
    <scope>INTERACTION WITH ATG16L2</scope>
    <scope>IDENTIFICATION IN A COMPLEX WITH ATG12 AND ATG16L2</scope>
</reference>
<reference evidence="20" key="20">
    <citation type="journal article" date="2024" name="J. Cell Biol.">
        <title>The V-ATPase-ATG16L1 axis recruits LRRK2 to facilitate the lysosomal stress response.</title>
        <authorList>
            <person name="Eguchi T."/>
            <person name="Sakurai M."/>
            <person name="Wang Y."/>
            <person name="Saito C."/>
            <person name="Yoshii G."/>
            <person name="Wileman T."/>
            <person name="Mizushima N."/>
            <person name="Kuwahara T."/>
            <person name="Iwatsubo T."/>
        </authorList>
    </citation>
    <scope>FUNCTION</scope>
</reference>
<dbReference type="EMBL" id="AB048349">
    <property type="protein sequence ID" value="BAB33383.1"/>
    <property type="molecule type" value="mRNA"/>
</dbReference>
<dbReference type="EMBL" id="AK028315">
    <property type="protein sequence ID" value="BAC25874.1"/>
    <property type="molecule type" value="mRNA"/>
</dbReference>
<dbReference type="EMBL" id="BC002166">
    <property type="protein sequence ID" value="AAH02166.1"/>
    <property type="molecule type" value="mRNA"/>
</dbReference>
<dbReference type="CCDS" id="CCDS23824.1"/>
<dbReference type="RefSeq" id="NP_001300942.1">
    <property type="nucleotide sequence ID" value="NM_001314013.1"/>
</dbReference>
<dbReference type="RefSeq" id="NP_001415301.1">
    <property type="nucleotide sequence ID" value="NM_001428372.1"/>
</dbReference>
<dbReference type="RefSeq" id="NP_444299.1">
    <property type="nucleotide sequence ID" value="NM_053069.7"/>
</dbReference>
<dbReference type="RefSeq" id="XP_011241410.1">
    <property type="nucleotide sequence ID" value="XM_011243108.2"/>
</dbReference>
<dbReference type="SMR" id="Q99J83"/>
<dbReference type="BioGRID" id="198146">
    <property type="interactions" value="240"/>
</dbReference>
<dbReference type="ComplexPortal" id="CPX-328">
    <property type="entry name" value="Atg12-Atg5-Atg16l1 complex"/>
</dbReference>
<dbReference type="ComplexPortal" id="CPX-355">
    <property type="entry name" value="Atg12-Atg5-Atg16l2 complex"/>
</dbReference>
<dbReference type="ComplexPortal" id="CPX-357">
    <property type="entry name" value="Atg5-Atg12 complex"/>
</dbReference>
<dbReference type="ComplexPortal" id="CPX-360">
    <property type="entry name" value="ATG5-ATG12-TECPR1 complex"/>
</dbReference>
<dbReference type="CORUM" id="Q99J83"/>
<dbReference type="DIP" id="DIP-46420N"/>
<dbReference type="FunCoup" id="Q99J83">
    <property type="interactions" value="2712"/>
</dbReference>
<dbReference type="IntAct" id="Q99J83">
    <property type="interactions" value="11"/>
</dbReference>
<dbReference type="MINT" id="Q99J83"/>
<dbReference type="STRING" id="10090.ENSMUSP00000044769"/>
<dbReference type="iPTMnet" id="Q99J83"/>
<dbReference type="PhosphoSitePlus" id="Q99J83"/>
<dbReference type="PaxDb" id="10090-ENSMUSP00000044769"/>
<dbReference type="PeptideAtlas" id="Q99J83"/>
<dbReference type="ProteomicsDB" id="277214"/>
<dbReference type="Pumba" id="Q99J83"/>
<dbReference type="Antibodypedia" id="32129">
    <property type="antibodies" value="1059 antibodies from 43 providers"/>
</dbReference>
<dbReference type="DNASU" id="11793"/>
<dbReference type="Ensembl" id="ENSMUST00000039286.5">
    <property type="protein sequence ID" value="ENSMUSP00000044769.5"/>
    <property type="gene ID" value="ENSMUSG00000038160.8"/>
</dbReference>
<dbReference type="GeneID" id="11793"/>
<dbReference type="KEGG" id="mmu:11793"/>
<dbReference type="UCSC" id="uc007ezt.1">
    <property type="organism name" value="mouse"/>
</dbReference>
<dbReference type="AGR" id="MGI:1277186"/>
<dbReference type="CTD" id="9474"/>
<dbReference type="MGI" id="MGI:1277186">
    <property type="gene designation" value="Atg5"/>
</dbReference>
<dbReference type="VEuPathDB" id="HostDB:ENSMUSG00000038160"/>
<dbReference type="eggNOG" id="KOG2976">
    <property type="taxonomic scope" value="Eukaryota"/>
</dbReference>
<dbReference type="GeneTree" id="ENSGT00390000004766"/>
<dbReference type="HOGENOM" id="CLU_051894_1_0_1"/>
<dbReference type="InParanoid" id="Q99J83"/>
<dbReference type="OMA" id="SIQKAVW"/>
<dbReference type="OrthoDB" id="272162at2759"/>
<dbReference type="PhylomeDB" id="Q99J83"/>
<dbReference type="TreeFam" id="TF314415"/>
<dbReference type="Reactome" id="R-MMU-1632852">
    <property type="pathway name" value="Macroautophagy"/>
</dbReference>
<dbReference type="Reactome" id="R-MMU-5205685">
    <property type="pathway name" value="PINK1-PRKN Mediated Mitophagy"/>
</dbReference>
<dbReference type="Reactome" id="R-MMU-8934903">
    <property type="pathway name" value="Receptor Mediated Mitophagy"/>
</dbReference>
<dbReference type="BioGRID-ORCS" id="11793">
    <property type="hits" value="24 hits in 85 CRISPR screens"/>
</dbReference>
<dbReference type="ChiTaRS" id="Atg5">
    <property type="organism name" value="mouse"/>
</dbReference>
<dbReference type="PRO" id="PR:Q99J83"/>
<dbReference type="Proteomes" id="UP000000589">
    <property type="component" value="Chromosome 10"/>
</dbReference>
<dbReference type="RNAct" id="Q99J83">
    <property type="molecule type" value="protein"/>
</dbReference>
<dbReference type="Bgee" id="ENSMUSG00000038160">
    <property type="expression patterns" value="Expressed in primary oocyte and 252 other cell types or tissues"/>
</dbReference>
<dbReference type="GO" id="GO:0034274">
    <property type="term" value="C:Atg12-Atg5-Atg16 complex"/>
    <property type="evidence" value="ECO:0000314"/>
    <property type="project" value="ComplexPortal"/>
</dbReference>
<dbReference type="GO" id="GO:0005776">
    <property type="term" value="C:autophagosome"/>
    <property type="evidence" value="ECO:0000314"/>
    <property type="project" value="MGI"/>
</dbReference>
<dbReference type="GO" id="GO:0030424">
    <property type="term" value="C:axon"/>
    <property type="evidence" value="ECO:0007669"/>
    <property type="project" value="Ensembl"/>
</dbReference>
<dbReference type="GO" id="GO:0005930">
    <property type="term" value="C:axoneme"/>
    <property type="evidence" value="ECO:0000314"/>
    <property type="project" value="UniProtKB"/>
</dbReference>
<dbReference type="GO" id="GO:0005737">
    <property type="term" value="C:cytoplasm"/>
    <property type="evidence" value="ECO:0000314"/>
    <property type="project" value="UniProtKB"/>
</dbReference>
<dbReference type="GO" id="GO:0005829">
    <property type="term" value="C:cytosol"/>
    <property type="evidence" value="ECO:0000304"/>
    <property type="project" value="Reactome"/>
</dbReference>
<dbReference type="GO" id="GO:0098978">
    <property type="term" value="C:glutamatergic synapse"/>
    <property type="evidence" value="ECO:0000314"/>
    <property type="project" value="SynGO"/>
</dbReference>
<dbReference type="GO" id="GO:0016020">
    <property type="term" value="C:membrane"/>
    <property type="evidence" value="ECO:0000266"/>
    <property type="project" value="MGI"/>
</dbReference>
<dbReference type="GO" id="GO:0044233">
    <property type="term" value="C:mitochondria-associated endoplasmic reticulum membrane contact site"/>
    <property type="evidence" value="ECO:0000314"/>
    <property type="project" value="MGI"/>
</dbReference>
<dbReference type="GO" id="GO:0034045">
    <property type="term" value="C:phagophore assembly site membrane"/>
    <property type="evidence" value="ECO:0000314"/>
    <property type="project" value="UniProtKB"/>
</dbReference>
<dbReference type="GO" id="GO:0098794">
    <property type="term" value="C:postsynapse"/>
    <property type="evidence" value="ECO:0007669"/>
    <property type="project" value="GOC"/>
</dbReference>
<dbReference type="GO" id="GO:0032991">
    <property type="term" value="C:protein-containing complex"/>
    <property type="evidence" value="ECO:0000303"/>
    <property type="project" value="ComplexPortal"/>
</dbReference>
<dbReference type="GO" id="GO:0098685">
    <property type="term" value="C:Schaffer collateral - CA1 synapse"/>
    <property type="evidence" value="ECO:0000314"/>
    <property type="project" value="SynGO"/>
</dbReference>
<dbReference type="GO" id="GO:1990234">
    <property type="term" value="C:transferase complex"/>
    <property type="evidence" value="ECO:0000314"/>
    <property type="project" value="ComplexPortal"/>
</dbReference>
<dbReference type="GO" id="GO:0019776">
    <property type="term" value="F:Atg8-family ligase activity"/>
    <property type="evidence" value="ECO:0007669"/>
    <property type="project" value="Ensembl"/>
</dbReference>
<dbReference type="GO" id="GO:0035973">
    <property type="term" value="P:aggrephagy"/>
    <property type="evidence" value="ECO:0000315"/>
    <property type="project" value="ParkinsonsUK-UCL"/>
</dbReference>
<dbReference type="GO" id="GO:0019883">
    <property type="term" value="P:antigen processing and presentation of endogenous antigen"/>
    <property type="evidence" value="ECO:0000315"/>
    <property type="project" value="MGI"/>
</dbReference>
<dbReference type="GO" id="GO:0006915">
    <property type="term" value="P:apoptotic process"/>
    <property type="evidence" value="ECO:0000315"/>
    <property type="project" value="MGI"/>
</dbReference>
<dbReference type="GO" id="GO:0000045">
    <property type="term" value="P:autophagosome assembly"/>
    <property type="evidence" value="ECO:0000315"/>
    <property type="project" value="UniProtKB"/>
</dbReference>
<dbReference type="GO" id="GO:0006914">
    <property type="term" value="P:autophagy"/>
    <property type="evidence" value="ECO:0000315"/>
    <property type="project" value="UniProtKB"/>
</dbReference>
<dbReference type="GO" id="GO:0098930">
    <property type="term" value="P:axonal transport"/>
    <property type="evidence" value="ECO:0000314"/>
    <property type="project" value="SynGO"/>
</dbReference>
<dbReference type="GO" id="GO:0001974">
    <property type="term" value="P:blood vessel remodeling"/>
    <property type="evidence" value="ECO:0000315"/>
    <property type="project" value="MGI"/>
</dbReference>
<dbReference type="GO" id="GO:0010659">
    <property type="term" value="P:cardiac muscle cell apoptotic process"/>
    <property type="evidence" value="ECO:0000315"/>
    <property type="project" value="MGI"/>
</dbReference>
<dbReference type="GO" id="GO:0071500">
    <property type="term" value="P:cellular response to nitrosative stress"/>
    <property type="evidence" value="ECO:0000315"/>
    <property type="project" value="ParkinsonsUK-UCL"/>
</dbReference>
<dbReference type="GO" id="GO:0009267">
    <property type="term" value="P:cellular response to starvation"/>
    <property type="evidence" value="ECO:0000315"/>
    <property type="project" value="MGI"/>
</dbReference>
<dbReference type="GO" id="GO:0061684">
    <property type="term" value="P:chaperone-mediated autophagy"/>
    <property type="evidence" value="ECO:0007669"/>
    <property type="project" value="Ensembl"/>
</dbReference>
<dbReference type="GO" id="GO:0006325">
    <property type="term" value="P:chromatin organization"/>
    <property type="evidence" value="ECO:0000315"/>
    <property type="project" value="MGI"/>
</dbReference>
<dbReference type="GO" id="GO:0051607">
    <property type="term" value="P:defense response to virus"/>
    <property type="evidence" value="ECO:0000315"/>
    <property type="project" value="MGI"/>
</dbReference>
<dbReference type="GO" id="GO:0051649">
    <property type="term" value="P:establishment of localization in cell"/>
    <property type="evidence" value="ECO:0000315"/>
    <property type="project" value="MGI"/>
</dbReference>
<dbReference type="GO" id="GO:0060047">
    <property type="term" value="P:heart contraction"/>
    <property type="evidence" value="ECO:0000315"/>
    <property type="project" value="MGI"/>
</dbReference>
<dbReference type="GO" id="GO:0045087">
    <property type="term" value="P:innate immune response"/>
    <property type="evidence" value="ECO:0000315"/>
    <property type="project" value="MGI"/>
</dbReference>
<dbReference type="GO" id="GO:0016236">
    <property type="term" value="P:macroautophagy"/>
    <property type="evidence" value="ECO:0000315"/>
    <property type="project" value="ComplexPortal"/>
</dbReference>
<dbReference type="GO" id="GO:0070254">
    <property type="term" value="P:mucus secretion"/>
    <property type="evidence" value="ECO:0000315"/>
    <property type="project" value="MGI"/>
</dbReference>
<dbReference type="GO" id="GO:1904093">
    <property type="term" value="P:negative regulation of autophagic cell death"/>
    <property type="evidence" value="ECO:0000266"/>
    <property type="project" value="MGI"/>
</dbReference>
<dbReference type="GO" id="GO:0010667">
    <property type="term" value="P:negative regulation of cardiac muscle cell apoptotic process"/>
    <property type="evidence" value="ECO:0000315"/>
    <property type="project" value="MGI"/>
</dbReference>
<dbReference type="GO" id="GO:0050687">
    <property type="term" value="P:negative regulation of defense response to virus"/>
    <property type="evidence" value="ECO:0000314"/>
    <property type="project" value="ComplexPortal"/>
</dbReference>
<dbReference type="GO" id="GO:0045824">
    <property type="term" value="P:negative regulation of innate immune response"/>
    <property type="evidence" value="ECO:0000314"/>
    <property type="project" value="ComplexPortal"/>
</dbReference>
<dbReference type="GO" id="GO:0050765">
    <property type="term" value="P:negative regulation of phagocytosis"/>
    <property type="evidence" value="ECO:0000315"/>
    <property type="project" value="MGI"/>
</dbReference>
<dbReference type="GO" id="GO:0031397">
    <property type="term" value="P:negative regulation of protein ubiquitination"/>
    <property type="evidence" value="ECO:0000315"/>
    <property type="project" value="MGI"/>
</dbReference>
<dbReference type="GO" id="GO:0032480">
    <property type="term" value="P:negative regulation of type I interferon production"/>
    <property type="evidence" value="ECO:0000314"/>
    <property type="project" value="ComplexPortal"/>
</dbReference>
<dbReference type="GO" id="GO:0039689">
    <property type="term" value="P:negative stranded viral RNA replication"/>
    <property type="evidence" value="ECO:0000315"/>
    <property type="project" value="MGI"/>
</dbReference>
<dbReference type="GO" id="GO:0045060">
    <property type="term" value="P:negative thymic T cell selection"/>
    <property type="evidence" value="ECO:0000315"/>
    <property type="project" value="MGI"/>
</dbReference>
<dbReference type="GO" id="GO:0048840">
    <property type="term" value="P:otolith development"/>
    <property type="evidence" value="ECO:0000315"/>
    <property type="project" value="MGI"/>
</dbReference>
<dbReference type="GO" id="GO:0010508">
    <property type="term" value="P:positive regulation of autophagy"/>
    <property type="evidence" value="ECO:0007669"/>
    <property type="project" value="Ensembl"/>
</dbReference>
<dbReference type="GO" id="GO:0070257">
    <property type="term" value="P:positive regulation of mucus secretion"/>
    <property type="evidence" value="ECO:0000315"/>
    <property type="project" value="MGI"/>
</dbReference>
<dbReference type="GO" id="GO:0062029">
    <property type="term" value="P:positive regulation of stress granule assembly"/>
    <property type="evidence" value="ECO:0007669"/>
    <property type="project" value="Ensembl"/>
</dbReference>
<dbReference type="GO" id="GO:1904973">
    <property type="term" value="P:positive regulation of viral translation"/>
    <property type="evidence" value="ECO:0000266"/>
    <property type="project" value="ComplexPortal"/>
</dbReference>
<dbReference type="GO" id="GO:0043687">
    <property type="term" value="P:post-translational protein modification"/>
    <property type="evidence" value="ECO:0000314"/>
    <property type="project" value="UniProtKB"/>
</dbReference>
<dbReference type="GO" id="GO:0099170">
    <property type="term" value="P:postsynaptic modulation of chemical synaptic transmission"/>
    <property type="evidence" value="ECO:0000314"/>
    <property type="project" value="SynGO"/>
</dbReference>
<dbReference type="GO" id="GO:0016567">
    <property type="term" value="P:protein ubiquitination"/>
    <property type="evidence" value="ECO:0000315"/>
    <property type="project" value="MGI"/>
</dbReference>
<dbReference type="GO" id="GO:1901096">
    <property type="term" value="P:regulation of autophagosome maturation"/>
    <property type="evidence" value="ECO:0000266"/>
    <property type="project" value="ComplexPortal"/>
</dbReference>
<dbReference type="GO" id="GO:1902017">
    <property type="term" value="P:regulation of cilium assembly"/>
    <property type="evidence" value="ECO:0000315"/>
    <property type="project" value="UniProtKB"/>
</dbReference>
<dbReference type="GO" id="GO:0002718">
    <property type="term" value="P:regulation of cytokine production involved in immune response"/>
    <property type="evidence" value="ECO:0000315"/>
    <property type="project" value="MGI"/>
</dbReference>
<dbReference type="GO" id="GO:0099072">
    <property type="term" value="P:regulation of postsynaptic membrane neurotransmitter receptor levels"/>
    <property type="evidence" value="ECO:0000314"/>
    <property type="project" value="SynGO"/>
</dbReference>
<dbReference type="GO" id="GO:2000377">
    <property type="term" value="P:regulation of reactive oxygen species metabolic process"/>
    <property type="evidence" value="ECO:0000315"/>
    <property type="project" value="MGI"/>
</dbReference>
<dbReference type="GO" id="GO:0051279">
    <property type="term" value="P:regulation of release of sequestered calcium ion into cytosol"/>
    <property type="evidence" value="ECO:0000315"/>
    <property type="project" value="MGI"/>
</dbReference>
<dbReference type="GO" id="GO:1902617">
    <property type="term" value="P:response to fluoride"/>
    <property type="evidence" value="ECO:0007669"/>
    <property type="project" value="Ensembl"/>
</dbReference>
<dbReference type="GO" id="GO:0009620">
    <property type="term" value="P:response to fungus"/>
    <property type="evidence" value="ECO:0000315"/>
    <property type="project" value="MGI"/>
</dbReference>
<dbReference type="GO" id="GO:0010040">
    <property type="term" value="P:response to iron(II) ion"/>
    <property type="evidence" value="ECO:0007669"/>
    <property type="project" value="Ensembl"/>
</dbReference>
<dbReference type="GO" id="GO:0009410">
    <property type="term" value="P:response to xenobiotic stimulus"/>
    <property type="evidence" value="ECO:0000315"/>
    <property type="project" value="MGI"/>
</dbReference>
<dbReference type="GO" id="GO:0042311">
    <property type="term" value="P:vasodilation"/>
    <property type="evidence" value="ECO:0000315"/>
    <property type="project" value="MGI"/>
</dbReference>
<dbReference type="GO" id="GO:0055015">
    <property type="term" value="P:ventricular cardiac muscle cell development"/>
    <property type="evidence" value="ECO:0000315"/>
    <property type="project" value="MGI"/>
</dbReference>
<dbReference type="FunFam" id="1.10.246.190:FF:000001">
    <property type="entry name" value="Autophagy related 5"/>
    <property type="match status" value="1"/>
</dbReference>
<dbReference type="FunFam" id="3.10.20.620:FF:000001">
    <property type="entry name" value="Autophagy related 5"/>
    <property type="match status" value="1"/>
</dbReference>
<dbReference type="FunFam" id="3.10.20.90:FF:000100">
    <property type="entry name" value="Autophagy related 5"/>
    <property type="match status" value="1"/>
</dbReference>
<dbReference type="Gene3D" id="3.10.20.620">
    <property type="match status" value="1"/>
</dbReference>
<dbReference type="Gene3D" id="1.10.246.190">
    <property type="entry name" value="Autophagy protein Apg5, helix rich domain"/>
    <property type="match status" value="1"/>
</dbReference>
<dbReference type="Gene3D" id="3.10.20.90">
    <property type="entry name" value="Phosphatidylinositol 3-kinase Catalytic Subunit, Chain A, domain 1"/>
    <property type="match status" value="1"/>
</dbReference>
<dbReference type="InterPro" id="IPR007239">
    <property type="entry name" value="Atg5"/>
</dbReference>
<dbReference type="InterPro" id="IPR048940">
    <property type="entry name" value="ATG5_HBR"/>
</dbReference>
<dbReference type="InterPro" id="IPR042526">
    <property type="entry name" value="Atg5_HR"/>
</dbReference>
<dbReference type="InterPro" id="IPR048939">
    <property type="entry name" value="ATG5_UblA"/>
</dbReference>
<dbReference type="InterPro" id="IPR042527">
    <property type="entry name" value="Atg5_UblA_dom_sf"/>
</dbReference>
<dbReference type="InterPro" id="IPR048318">
    <property type="entry name" value="ATG5_UblB"/>
</dbReference>
<dbReference type="PANTHER" id="PTHR13040">
    <property type="entry name" value="AUTOPHAGY PROTEIN 5"/>
    <property type="match status" value="1"/>
</dbReference>
<dbReference type="PANTHER" id="PTHR13040:SF2">
    <property type="entry name" value="AUTOPHAGY PROTEIN 5"/>
    <property type="match status" value="1"/>
</dbReference>
<dbReference type="Pfam" id="PF20637">
    <property type="entry name" value="ATG5_HBR"/>
    <property type="match status" value="1"/>
</dbReference>
<dbReference type="Pfam" id="PF20638">
    <property type="entry name" value="ATG5_UblA"/>
    <property type="match status" value="1"/>
</dbReference>
<dbReference type="Pfam" id="PF04106">
    <property type="entry name" value="ATG5_UblB"/>
    <property type="match status" value="1"/>
</dbReference>
<organism>
    <name type="scientific">Mus musculus</name>
    <name type="common">Mouse</name>
    <dbReference type="NCBI Taxonomy" id="10090"/>
    <lineage>
        <taxon>Eukaryota</taxon>
        <taxon>Metazoa</taxon>
        <taxon>Chordata</taxon>
        <taxon>Craniata</taxon>
        <taxon>Vertebrata</taxon>
        <taxon>Euteleostomi</taxon>
        <taxon>Mammalia</taxon>
        <taxon>Eutheria</taxon>
        <taxon>Euarchontoglires</taxon>
        <taxon>Glires</taxon>
        <taxon>Rodentia</taxon>
        <taxon>Myomorpha</taxon>
        <taxon>Muroidea</taxon>
        <taxon>Muridae</taxon>
        <taxon>Murinae</taxon>
        <taxon>Mus</taxon>
        <taxon>Mus</taxon>
    </lineage>
</organism>
<feature type="chain" id="PRO_0000218995" description="Autophagy protein 5">
    <location>
        <begin position="1"/>
        <end position="275"/>
    </location>
</feature>
<feature type="modified residue" description="N-acetylmethionine" evidence="2">
    <location>
        <position position="1"/>
    </location>
</feature>
<feature type="cross-link" description="Glycyl lysine isopeptide (Lys-Gly) (interchain with G-Cter in ATG12)" evidence="1">
    <location>
        <position position="130"/>
    </location>
</feature>
<feature type="mutagenesis site" description="Loss of conjugation." evidence="3">
    <original>K</original>
    <variation>R</variation>
    <location>
        <position position="130"/>
    </location>
</feature>
<comment type="function">
    <text evidence="3 6 7 9 10 13 14 16 17 19">Involved in autophagic vesicle formation. Conjugation with ATG12, through a ubiquitin-like conjugating system involving ATG7 as an E1-like activating enzyme and ATG10 as an E2-like conjugating enzyme, is essential for its function. The ATG12-ATG5 conjugate acts as an E3-like enzyme which is required for lipidation of ATG8 family proteins and their association to the vesicle membranes. Involved in mitochondrial quality control after oxidative damage, and in subsequent cellular longevity. Plays a critical role in multiple aspects of lymphocyte development and is essential for both B and T lymphocyte survival and proliferation. Required for optimal processing and presentation of antigens for MHC II. Involved in the maintenance of axon morphology and membrane structures, as well as in normal adipocyte differentiation. Promotes primary ciliogenesis through removal of OFD1 from centriolar satellites and degradation of IFT20 via the autophagic pathway. As part of the ATG8 conjugation system with ATG12 and ATG16L1, required for recruitment of LRRK2 to stressed lysosomes and induction of LRRK2 kinase activity in response to lysosomal stress (PubMed:38227290).</text>
</comment>
<comment type="function">
    <text evidence="2">May play an important role in the apoptotic process, possibly within the modified cytoskeleton. Its expression is a relatively late event in the apoptotic process, occurring downstream of caspase activity. Plays a crucial role in IFN-gamma-induced autophagic cell death by interacting with FADD (By similarity).</text>
</comment>
<comment type="function">
    <text evidence="8">(Microbial infection) May act as a proviral factor. In association with ATG12, negatively regulates the innate antiviral immune response by impairing the type I IFN production pathway upon vesicular stomatitis virus (VSV) infection.</text>
</comment>
<comment type="subunit">
    <text evidence="2 3 4 5 6 8 11 12 15 18">Forms a conjugate with ATG12 (PubMed:11266458, PubMed:12665549, PubMed:12890687, PubMed:18768753, PubMed:19417210). Part of the minor complex composed of 4 sets of ATG12-ATG5 and ATG16L1 (400 kDa); this complex interacts with ATG3 leading to disruption of ATG7 interaction and promotion of ATG8-like proteins lipidation (PubMed:12665549). Forms an 800-kDa complex composed of ATG12-ATG5 and ATG16L2 (PubMed:22082872). The ATG12-ATG5 conjugate interacts with RAB33A; this interaction is bridged by ATG16L1 and promotes ATG12-ATG5-ATG16L1 complex recruitment to phagophores (By similarity). Interacts with TECPR1; the interaction is direct and does not take place when ATG16L1 is associated with the ATG5-ATG12 conjugate (By similarity). Interacts with DHX58/RIG-1, IFIH1/MDA5 and MAVS/IPS-1 in monomeric form as well as in ATG12-ATG5 conjugate form. The interaction with MAVS is further enhanced upon vesicular stomatitis virus (VSV) infection (PubMed:17709747). Interacts with ATG3 (By similarity). Interacts with ATG7 and ATG10 (PubMed:12482611). Interacts with FADD (By similarity). Interacts with Bassoon/BSN; this interaction is important for the regulation of presynaptic autophagy. Interacts with ATG16L2 (PubMed:22082872).</text>
</comment>
<comment type="interaction">
    <interactant intactId="EBI-2911848">
        <id>Q99J83</id>
    </interactant>
    <interactant intactId="EBI-2911788">
        <id>Q9CQY1</id>
        <label>Atg12</label>
    </interactant>
    <organismsDiffer>false</organismsDiffer>
    <experiments>4</experiments>
</comment>
<comment type="interaction">
    <interactant intactId="EBI-2911848">
        <id>Q99J83</id>
    </interactant>
    <interactant intactId="EBI-769195">
        <id>Q8C0J2</id>
        <label>Atg16l1</label>
    </interactant>
    <organismsDiffer>false</organismsDiffer>
    <experiments>4</experiments>
</comment>
<comment type="subcellular location">
    <subcellularLocation>
        <location evidence="17">Cytoplasm</location>
    </subcellularLocation>
    <subcellularLocation>
        <location evidence="17">Preautophagosomal structure membrane</location>
        <topology evidence="17">Peripheral membrane protein</topology>
    </subcellularLocation>
    <text evidence="2">The conjugate detaches from the membrane immediately before or after autophagosome formation is completed. Also localizes to discrete punctae along the ciliary axoneme and to the base of the ciliary axoneme. Under starved conditions, the ATG12-ATG5-ATG16L1 complex is translocated to phagophores driven by RAB33B (By similarity).</text>
</comment>
<comment type="tissue specificity">
    <text>Ubiquitous.</text>
</comment>
<comment type="PTM">
    <text>Conjugated to ATG12; which is essential for autophagy, but is not required for association with isolation membrane.</text>
</comment>
<comment type="PTM">
    <text evidence="1">Acetylated by EP300.</text>
</comment>
<comment type="similarity">
    <text evidence="20">Belongs to the ATG5 family.</text>
</comment>
<sequence length="275" mass="32402">MTDDKDVLRDVWFGRIPTCFTLYQDEITEREAEPYYLLLPRVSYLTLVTDKVKKHFQKVMRQEDVSEIWFEYEGTPLKWHYPIGLLFDLLASSSALPWNITVHFKSFPEKDLLHCPSKDAVEAHFMSCMKEADALKHKSQVINEMQKKDHKQLWMGLQNDRFDQFWAINRKLMEYPPEENGFRYIPFRIYQTTTERPFIQKLFRPVAADGQLHTLGDLLREVCPSAVAPEDGEKRSQVMIHGIEPMLETPLQWLSEHLSYPDNFLHISIVPQPTD</sequence>
<evidence type="ECO:0000250" key="1"/>
<evidence type="ECO:0000250" key="2">
    <source>
        <dbReference type="UniProtKB" id="Q9H1Y0"/>
    </source>
</evidence>
<evidence type="ECO:0000269" key="3">
    <source>
    </source>
</evidence>
<evidence type="ECO:0000269" key="4">
    <source>
    </source>
</evidence>
<evidence type="ECO:0000269" key="5">
    <source>
    </source>
</evidence>
<evidence type="ECO:0000269" key="6">
    <source>
    </source>
</evidence>
<evidence type="ECO:0000269" key="7">
    <source>
    </source>
</evidence>
<evidence type="ECO:0000269" key="8">
    <source>
    </source>
</evidence>
<evidence type="ECO:0000269" key="9">
    <source>
    </source>
</evidence>
<evidence type="ECO:0000269" key="10">
    <source>
    </source>
</evidence>
<evidence type="ECO:0000269" key="11">
    <source>
    </source>
</evidence>
<evidence type="ECO:0000269" key="12">
    <source>
    </source>
</evidence>
<evidence type="ECO:0000269" key="13">
    <source>
    </source>
</evidence>
<evidence type="ECO:0000269" key="14">
    <source>
    </source>
</evidence>
<evidence type="ECO:0000269" key="15">
    <source>
    </source>
</evidence>
<evidence type="ECO:0000269" key="16">
    <source>
    </source>
</evidence>
<evidence type="ECO:0000269" key="17">
    <source>
    </source>
</evidence>
<evidence type="ECO:0000269" key="18">
    <source>
    </source>
</evidence>
<evidence type="ECO:0000269" key="19">
    <source>
    </source>
</evidence>
<evidence type="ECO:0000305" key="20"/>
<evidence type="ECO:0000312" key="21">
    <source>
        <dbReference type="MGI" id="MGI:1277186"/>
    </source>
</evidence>